<keyword id="KW-0903">Direct protein sequencing</keyword>
<keyword id="KW-1185">Reference proteome</keyword>
<name>SMBP_RAT</name>
<dbReference type="InParanoid" id="P80968"/>
<dbReference type="Proteomes" id="UP000002494">
    <property type="component" value="Unplaced"/>
</dbReference>
<sequence>FVVFILADPARYFQFYFPXFFQHR</sequence>
<reference key="1">
    <citation type="journal article" date="1997" name="J. Biol. Chem.">
        <title>Characterization of a novel iodocyanopindolol and SM-11044 binding protein, which may mediate relaxation of depolarized rat colon tonus.</title>
        <authorList>
            <person name="Sugasawa T."/>
            <person name="Matsuzaki-Fujita M."/>
            <person name="Guillaume J.-L."/>
            <person name="Camoin L."/>
            <person name="Morooka S."/>
            <person name="Strosberg A.D."/>
        </authorList>
    </citation>
    <scope>PROTEIN SEQUENCE</scope>
    <scope>FUNCTION</scope>
    <source>
        <strain>Wistar</strain>
    </source>
</reference>
<organism>
    <name type="scientific">Rattus norvegicus</name>
    <name type="common">Rat</name>
    <dbReference type="NCBI Taxonomy" id="10116"/>
    <lineage>
        <taxon>Eukaryota</taxon>
        <taxon>Metazoa</taxon>
        <taxon>Chordata</taxon>
        <taxon>Craniata</taxon>
        <taxon>Vertebrata</taxon>
        <taxon>Euteleostomi</taxon>
        <taxon>Mammalia</taxon>
        <taxon>Eutheria</taxon>
        <taxon>Euarchontoglires</taxon>
        <taxon>Glires</taxon>
        <taxon>Rodentia</taxon>
        <taxon>Myomorpha</taxon>
        <taxon>Muroidea</taxon>
        <taxon>Muridae</taxon>
        <taxon>Murinae</taxon>
        <taxon>Rattus</taxon>
    </lineage>
</organism>
<evidence type="ECO:0000269" key="1">
    <source>
    </source>
</evidence>
<evidence type="ECO:0000305" key="2"/>
<accession>P80968</accession>
<protein>
    <recommendedName>
        <fullName>SM-11044-binding protein</fullName>
    </recommendedName>
</protein>
<comment type="function">
    <text evidence="1">May mediate relaxation of depolarized colon tonus. It binds iodocyanopindolol and SM-11044.</text>
</comment>
<comment type="caution">
    <text evidence="2">The order of the peptides shown is unknown.</text>
</comment>
<feature type="chain" id="PRO_0000071965" description="SM-11044-binding protein">
    <location>
        <begin position="1" status="less than"/>
        <end position="24" status="greater than"/>
    </location>
</feature>
<feature type="unsure residue" description="I or Y">
    <location>
        <position position="5"/>
    </location>
</feature>
<feature type="non-consecutive residues" evidence="2">
    <location>
        <begin position="17"/>
        <end position="18"/>
    </location>
</feature>
<feature type="non-terminal residue">
    <location>
        <position position="1"/>
    </location>
</feature>
<feature type="non-terminal residue">
    <location>
        <position position="24"/>
    </location>
</feature>
<proteinExistence type="evidence at protein level"/>